<feature type="chain" id="PRO_0000205428" description="Developmentally-regulated GTP-binding protein 2">
    <location>
        <begin position="1"/>
        <end position="364"/>
    </location>
</feature>
<feature type="domain" description="OBG-type G" evidence="3">
    <location>
        <begin position="63"/>
        <end position="288"/>
    </location>
</feature>
<feature type="domain" description="TGS" evidence="4">
    <location>
        <begin position="288"/>
        <end position="363"/>
    </location>
</feature>
<feature type="binding site" evidence="3">
    <location>
        <begin position="69"/>
        <end position="76"/>
    </location>
    <ligand>
        <name>GTP</name>
        <dbReference type="ChEBI" id="CHEBI:37565"/>
    </ligand>
</feature>
<feature type="binding site" evidence="3">
    <location>
        <position position="76"/>
    </location>
    <ligand>
        <name>Mg(2+)</name>
        <dbReference type="ChEBI" id="CHEBI:18420"/>
    </ligand>
</feature>
<feature type="binding site" evidence="3">
    <location>
        <begin position="94"/>
        <end position="98"/>
    </location>
    <ligand>
        <name>GTP</name>
        <dbReference type="ChEBI" id="CHEBI:37565"/>
    </ligand>
</feature>
<feature type="binding site" evidence="3">
    <location>
        <position position="96"/>
    </location>
    <ligand>
        <name>Mg(2+)</name>
        <dbReference type="ChEBI" id="CHEBI:18420"/>
    </ligand>
</feature>
<feature type="binding site" evidence="3">
    <location>
        <begin position="115"/>
        <end position="118"/>
    </location>
    <ligand>
        <name>GTP</name>
        <dbReference type="ChEBI" id="CHEBI:37565"/>
    </ligand>
</feature>
<feature type="binding site" evidence="3">
    <location>
        <begin position="246"/>
        <end position="249"/>
    </location>
    <ligand>
        <name>GTP</name>
        <dbReference type="ChEBI" id="CHEBI:37565"/>
    </ligand>
</feature>
<feature type="binding site" evidence="3">
    <location>
        <begin position="269"/>
        <end position="271"/>
    </location>
    <ligand>
        <name>GTP</name>
        <dbReference type="ChEBI" id="CHEBI:37565"/>
    </ligand>
</feature>
<feature type="modified residue" description="(3S)-3-hydroxylysine" evidence="2">
    <location>
        <position position="21"/>
    </location>
</feature>
<sequence length="364" mass="40718">MGILEKISEIEKEIARTQKNKATEYHLGLLKAKLAKYRAQLLEPSKSASSKGEGFDVMKSGDARVALIGFPSVGKSTFLSLMTSTASEAASYEFTTLTCIPGVIEYKGANIQLLDLPGIIEGAAQGRGRGRQVIAVARTADVVVMMLDATKGDVQRSLLEKELESVGIRLNKHKPNIYFKPKKGGGISFNSTVTLTQCSEKLVQLILHEYKIFNAEVLFREDCSPDDFIDVIVGNRVYMPCLYVYNKIDQISMEEVDRLARKPNSVVISCGMKLNLDYLLEMLWEYLALTCIYTKKRGQRPDFTDAIILRKGASVEHVCHRIHRSLASQFKYALVWGTSTKYSPQRVGLTHTMEHEDVIQIVKK</sequence>
<comment type="function">
    <text evidence="2">Catalyzes the conversion of GTP to GDP through hydrolysis of the gamma-phosphate bond in GTP. When hydroxylated at C-3 of 'Lys-21' by JMJD7, may bind to RNA and play a role in translation.</text>
</comment>
<comment type="catalytic activity">
    <reaction evidence="2">
        <text>GTP + H2O = GDP + phosphate + H(+)</text>
        <dbReference type="Rhea" id="RHEA:19669"/>
        <dbReference type="ChEBI" id="CHEBI:15377"/>
        <dbReference type="ChEBI" id="CHEBI:15378"/>
        <dbReference type="ChEBI" id="CHEBI:37565"/>
        <dbReference type="ChEBI" id="CHEBI:43474"/>
        <dbReference type="ChEBI" id="CHEBI:58189"/>
    </reaction>
</comment>
<comment type="cofactor">
    <cofactor evidence="2">
        <name>Mg(2+)</name>
        <dbReference type="ChEBI" id="CHEBI:18420"/>
    </cofactor>
</comment>
<comment type="subunit">
    <text evidence="1 2 5">Interacts with RWDD1; this interaction confers protection to polyubiquitination and proteolytic degradation (PubMed:15676025). Interacts with JMJD7; this interaction is direct (By similarity).</text>
</comment>
<comment type="subcellular location">
    <subcellularLocation>
        <location evidence="2">Nucleus</location>
    </subcellularLocation>
    <subcellularLocation>
        <location evidence="2">Cytoplasm</location>
    </subcellularLocation>
</comment>
<comment type="tissue specificity">
    <text>Fairly high levels in liver, heart, kidney, and brain. Very low levels in lung, spleen, testis and skeletal muscle.</text>
</comment>
<comment type="PTM">
    <text evidence="6">Polyubiquitinated.</text>
</comment>
<comment type="PTM">
    <text evidence="2">Hydroxylated (with S stereochemistry) at C-3 of Lys-21 by JMJD7.</text>
</comment>
<comment type="similarity">
    <text evidence="3">Belongs to the TRAFAC class OBG-HflX-like GTPase superfamily. OBG GTPase family.</text>
</comment>
<proteinExistence type="evidence at protein level"/>
<name>DRG2_MOUSE</name>
<reference key="1">
    <citation type="journal article" date="2000" name="Biochim. Biophys. Acta">
        <title>DRG represents a family of two closely related GTP-binding proteins.</title>
        <authorList>
            <person name="Li B."/>
            <person name="Trueeb B."/>
        </authorList>
    </citation>
    <scope>NUCLEOTIDE SEQUENCE [MRNA]</scope>
</reference>
<reference key="2">
    <citation type="journal article" date="2009" name="PLoS Biol.">
        <title>Lineage-specific biology revealed by a finished genome assembly of the mouse.</title>
        <authorList>
            <person name="Church D.M."/>
            <person name="Goodstadt L."/>
            <person name="Hillier L.W."/>
            <person name="Zody M.C."/>
            <person name="Goldstein S."/>
            <person name="She X."/>
            <person name="Bult C.J."/>
            <person name="Agarwala R."/>
            <person name="Cherry J.L."/>
            <person name="DiCuccio M."/>
            <person name="Hlavina W."/>
            <person name="Kapustin Y."/>
            <person name="Meric P."/>
            <person name="Maglott D."/>
            <person name="Birtle Z."/>
            <person name="Marques A.C."/>
            <person name="Graves T."/>
            <person name="Zhou S."/>
            <person name="Teague B."/>
            <person name="Potamousis K."/>
            <person name="Churas C."/>
            <person name="Place M."/>
            <person name="Herschleb J."/>
            <person name="Runnheim R."/>
            <person name="Forrest D."/>
            <person name="Amos-Landgraf J."/>
            <person name="Schwartz D.C."/>
            <person name="Cheng Z."/>
            <person name="Lindblad-Toh K."/>
            <person name="Eichler E.E."/>
            <person name="Ponting C.P."/>
        </authorList>
    </citation>
    <scope>NUCLEOTIDE SEQUENCE [LARGE SCALE GENOMIC DNA]</scope>
    <source>
        <strain>C57BL/6J</strain>
    </source>
</reference>
<reference key="3">
    <citation type="journal article" date="2004" name="Genome Res.">
        <title>The status, quality, and expansion of the NIH full-length cDNA project: the Mammalian Gene Collection (MGC).</title>
        <authorList>
            <consortium name="The MGC Project Team"/>
        </authorList>
    </citation>
    <scope>NUCLEOTIDE SEQUENCE [LARGE SCALE MRNA]</scope>
    <source>
        <strain>C57BL/6J</strain>
        <tissue>Eye</tissue>
    </source>
</reference>
<reference key="4">
    <citation type="journal article" date="2005" name="Genes Cells">
        <title>Identification of DRG family regulatory proteins (DFRPs): specific regulation of DRG1 and DRG2.</title>
        <authorList>
            <person name="Ishikawa K."/>
            <person name="Azuma S."/>
            <person name="Ikawa S."/>
            <person name="Semba K."/>
            <person name="Inoue J."/>
        </authorList>
    </citation>
    <scope>INTERACTION WITH RWDD1</scope>
    <scope>UBIQUITINATION</scope>
</reference>
<reference key="5">
    <citation type="journal article" date="2010" name="Cell">
        <title>A tissue-specific atlas of mouse protein phosphorylation and expression.</title>
        <authorList>
            <person name="Huttlin E.L."/>
            <person name="Jedrychowski M.P."/>
            <person name="Elias J.E."/>
            <person name="Goswami T."/>
            <person name="Rad R."/>
            <person name="Beausoleil S.A."/>
            <person name="Villen J."/>
            <person name="Haas W."/>
            <person name="Sowa M.E."/>
            <person name="Gygi S.P."/>
        </authorList>
    </citation>
    <scope>IDENTIFICATION BY MASS SPECTROMETRY [LARGE SCALE ANALYSIS]</scope>
    <source>
        <tissue>Brain</tissue>
        <tissue>Brown adipose tissue</tissue>
        <tissue>Heart</tissue>
        <tissue>Kidney</tissue>
        <tissue>Liver</tissue>
        <tissue>Lung</tissue>
        <tissue>Pancreas</tissue>
        <tissue>Spleen</tissue>
        <tissue>Testis</tissue>
    </source>
</reference>
<accession>Q9QXB9</accession>
<accession>Q5SX94</accession>
<keyword id="KW-0963">Cytoplasm</keyword>
<keyword id="KW-0342">GTP-binding</keyword>
<keyword id="KW-0378">Hydrolase</keyword>
<keyword id="KW-0379">Hydroxylation</keyword>
<keyword id="KW-0460">Magnesium</keyword>
<keyword id="KW-0479">Metal-binding</keyword>
<keyword id="KW-0547">Nucleotide-binding</keyword>
<keyword id="KW-0539">Nucleus</keyword>
<keyword id="KW-1185">Reference proteome</keyword>
<keyword id="KW-0832">Ubl conjugation</keyword>
<gene>
    <name type="primary">Drg2</name>
</gene>
<organism>
    <name type="scientific">Mus musculus</name>
    <name type="common">Mouse</name>
    <dbReference type="NCBI Taxonomy" id="10090"/>
    <lineage>
        <taxon>Eukaryota</taxon>
        <taxon>Metazoa</taxon>
        <taxon>Chordata</taxon>
        <taxon>Craniata</taxon>
        <taxon>Vertebrata</taxon>
        <taxon>Euteleostomi</taxon>
        <taxon>Mammalia</taxon>
        <taxon>Eutheria</taxon>
        <taxon>Euarchontoglires</taxon>
        <taxon>Glires</taxon>
        <taxon>Rodentia</taxon>
        <taxon>Myomorpha</taxon>
        <taxon>Muroidea</taxon>
        <taxon>Muridae</taxon>
        <taxon>Murinae</taxon>
        <taxon>Mus</taxon>
        <taxon>Mus</taxon>
    </lineage>
</organism>
<protein>
    <recommendedName>
        <fullName>Developmentally-regulated GTP-binding protein 2</fullName>
        <shortName>DRG-2</shortName>
    </recommendedName>
    <alternativeName>
        <fullName>Translation factor GTPase DRG2</fullName>
        <shortName>TRAFAC GTPase DRG2</shortName>
        <ecNumber>3.6.5.-</ecNumber>
    </alternativeName>
</protein>
<dbReference type="EC" id="3.6.5.-"/>
<dbReference type="EMBL" id="AJ243590">
    <property type="protein sequence ID" value="CAB65258.1"/>
    <property type="molecule type" value="mRNA"/>
</dbReference>
<dbReference type="EMBL" id="AL596090">
    <property type="status" value="NOT_ANNOTATED_CDS"/>
    <property type="molecule type" value="Genomic_DNA"/>
</dbReference>
<dbReference type="EMBL" id="BC082564">
    <property type="protein sequence ID" value="AAH82564.1"/>
    <property type="molecule type" value="mRNA"/>
</dbReference>
<dbReference type="CCDS" id="CCDS24791.1"/>
<dbReference type="RefSeq" id="NP_067329.1">
    <property type="nucleotide sequence ID" value="NM_021354.3"/>
</dbReference>
<dbReference type="SMR" id="Q9QXB9"/>
<dbReference type="BioGRID" id="199311">
    <property type="interactions" value="16"/>
</dbReference>
<dbReference type="CORUM" id="Q9QXB9"/>
<dbReference type="FunCoup" id="Q9QXB9">
    <property type="interactions" value="5218"/>
</dbReference>
<dbReference type="IntAct" id="Q9QXB9">
    <property type="interactions" value="2"/>
</dbReference>
<dbReference type="MINT" id="Q9QXB9"/>
<dbReference type="STRING" id="10090.ENSMUSP00000018568"/>
<dbReference type="GlyGen" id="Q9QXB9">
    <property type="glycosylation" value="1 site, 1 O-linked glycan (1 site)"/>
</dbReference>
<dbReference type="iPTMnet" id="Q9QXB9"/>
<dbReference type="PhosphoSitePlus" id="Q9QXB9"/>
<dbReference type="SwissPalm" id="Q9QXB9"/>
<dbReference type="jPOST" id="Q9QXB9"/>
<dbReference type="PaxDb" id="10090-ENSMUSP00000018568"/>
<dbReference type="PeptideAtlas" id="Q9QXB9"/>
<dbReference type="ProteomicsDB" id="279486"/>
<dbReference type="Pumba" id="Q9QXB9"/>
<dbReference type="Antibodypedia" id="1408">
    <property type="antibodies" value="127 antibodies from 23 providers"/>
</dbReference>
<dbReference type="DNASU" id="13495"/>
<dbReference type="Ensembl" id="ENSMUST00000018568.4">
    <property type="protein sequence ID" value="ENSMUSP00000018568.4"/>
    <property type="gene ID" value="ENSMUSG00000020537.10"/>
</dbReference>
<dbReference type="GeneID" id="13495"/>
<dbReference type="KEGG" id="mmu:13495"/>
<dbReference type="UCSC" id="uc007jfy.1">
    <property type="organism name" value="mouse"/>
</dbReference>
<dbReference type="AGR" id="MGI:1342307"/>
<dbReference type="CTD" id="1819"/>
<dbReference type="MGI" id="MGI:1342307">
    <property type="gene designation" value="Drg2"/>
</dbReference>
<dbReference type="VEuPathDB" id="HostDB:ENSMUSG00000020537"/>
<dbReference type="eggNOG" id="KOG1486">
    <property type="taxonomic scope" value="Eukaryota"/>
</dbReference>
<dbReference type="GeneTree" id="ENSGT00940000153340"/>
<dbReference type="HOGENOM" id="CLU_044997_0_0_1"/>
<dbReference type="InParanoid" id="Q9QXB9"/>
<dbReference type="OMA" id="DVCDQVH"/>
<dbReference type="OrthoDB" id="1708588at2759"/>
<dbReference type="PhylomeDB" id="Q9QXB9"/>
<dbReference type="TreeFam" id="TF105706"/>
<dbReference type="Reactome" id="R-MMU-9629569">
    <property type="pathway name" value="Protein hydroxylation"/>
</dbReference>
<dbReference type="BioGRID-ORCS" id="13495">
    <property type="hits" value="2 hits in 78 CRISPR screens"/>
</dbReference>
<dbReference type="ChiTaRS" id="Drg2">
    <property type="organism name" value="mouse"/>
</dbReference>
<dbReference type="PRO" id="PR:Q9QXB9"/>
<dbReference type="Proteomes" id="UP000000589">
    <property type="component" value="Chromosome 11"/>
</dbReference>
<dbReference type="RNAct" id="Q9QXB9">
    <property type="molecule type" value="protein"/>
</dbReference>
<dbReference type="Bgee" id="ENSMUSG00000020537">
    <property type="expression patterns" value="Expressed in ear vesicle and 253 other cell types or tissues"/>
</dbReference>
<dbReference type="GO" id="GO:0005829">
    <property type="term" value="C:cytosol"/>
    <property type="evidence" value="ECO:0007669"/>
    <property type="project" value="Ensembl"/>
</dbReference>
<dbReference type="GO" id="GO:0005739">
    <property type="term" value="C:mitochondrion"/>
    <property type="evidence" value="ECO:0007005"/>
    <property type="project" value="MGI"/>
</dbReference>
<dbReference type="GO" id="GO:0005654">
    <property type="term" value="C:nucleoplasm"/>
    <property type="evidence" value="ECO:0007669"/>
    <property type="project" value="Ensembl"/>
</dbReference>
<dbReference type="GO" id="GO:0005525">
    <property type="term" value="F:GTP binding"/>
    <property type="evidence" value="ECO:0007669"/>
    <property type="project" value="UniProtKB-KW"/>
</dbReference>
<dbReference type="GO" id="GO:0003924">
    <property type="term" value="F:GTPase activity"/>
    <property type="evidence" value="ECO:0007669"/>
    <property type="project" value="Ensembl"/>
</dbReference>
<dbReference type="GO" id="GO:0046872">
    <property type="term" value="F:metal ion binding"/>
    <property type="evidence" value="ECO:0007669"/>
    <property type="project" value="UniProtKB-KW"/>
</dbReference>
<dbReference type="GO" id="GO:0003723">
    <property type="term" value="F:RNA binding"/>
    <property type="evidence" value="ECO:0007669"/>
    <property type="project" value="Ensembl"/>
</dbReference>
<dbReference type="CDD" id="cd01896">
    <property type="entry name" value="DRG"/>
    <property type="match status" value="1"/>
</dbReference>
<dbReference type="CDD" id="cd17231">
    <property type="entry name" value="TGS_DRG2"/>
    <property type="match status" value="1"/>
</dbReference>
<dbReference type="FunFam" id="3.10.20.30:FF:000016">
    <property type="entry name" value="Developmentally-regulated GTP-binding protein 2"/>
    <property type="match status" value="1"/>
</dbReference>
<dbReference type="FunFam" id="3.40.50.300:FF:000740">
    <property type="entry name" value="Putative GTP-binding protein 1"/>
    <property type="match status" value="1"/>
</dbReference>
<dbReference type="Gene3D" id="3.10.20.30">
    <property type="match status" value="1"/>
</dbReference>
<dbReference type="Gene3D" id="6.10.140.1070">
    <property type="match status" value="2"/>
</dbReference>
<dbReference type="InterPro" id="IPR012675">
    <property type="entry name" value="Beta-grasp_dom_sf"/>
</dbReference>
<dbReference type="InterPro" id="IPR045001">
    <property type="entry name" value="DRG"/>
</dbReference>
<dbReference type="InterPro" id="IPR031167">
    <property type="entry name" value="G_OBG"/>
</dbReference>
<dbReference type="InterPro" id="IPR006073">
    <property type="entry name" value="GTP-bd"/>
</dbReference>
<dbReference type="InterPro" id="IPR031662">
    <property type="entry name" value="GTP-binding_2"/>
</dbReference>
<dbReference type="InterPro" id="IPR006074">
    <property type="entry name" value="GTP1-OBG_CS"/>
</dbReference>
<dbReference type="InterPro" id="IPR027417">
    <property type="entry name" value="P-loop_NTPase"/>
</dbReference>
<dbReference type="InterPro" id="IPR005225">
    <property type="entry name" value="Small_GTP-bd"/>
</dbReference>
<dbReference type="InterPro" id="IPR004095">
    <property type="entry name" value="TGS"/>
</dbReference>
<dbReference type="InterPro" id="IPR012676">
    <property type="entry name" value="TGS-like"/>
</dbReference>
<dbReference type="NCBIfam" id="TIGR00231">
    <property type="entry name" value="small_GTP"/>
    <property type="match status" value="1"/>
</dbReference>
<dbReference type="PANTHER" id="PTHR43127">
    <property type="entry name" value="DEVELOPMENTALLY-REGULATED GTP-BINDING PROTEIN 2"/>
    <property type="match status" value="1"/>
</dbReference>
<dbReference type="Pfam" id="PF01926">
    <property type="entry name" value="MMR_HSR1"/>
    <property type="match status" value="1"/>
</dbReference>
<dbReference type="Pfam" id="PF16897">
    <property type="entry name" value="MMR_HSR1_Xtn"/>
    <property type="match status" value="1"/>
</dbReference>
<dbReference type="Pfam" id="PF02824">
    <property type="entry name" value="TGS"/>
    <property type="match status" value="1"/>
</dbReference>
<dbReference type="PRINTS" id="PR00326">
    <property type="entry name" value="GTP1OBG"/>
</dbReference>
<dbReference type="SUPFAM" id="SSF52540">
    <property type="entry name" value="P-loop containing nucleoside triphosphate hydrolases"/>
    <property type="match status" value="1"/>
</dbReference>
<dbReference type="SUPFAM" id="SSF81271">
    <property type="entry name" value="TGS-like"/>
    <property type="match status" value="1"/>
</dbReference>
<dbReference type="PROSITE" id="PS51710">
    <property type="entry name" value="G_OBG"/>
    <property type="match status" value="1"/>
</dbReference>
<dbReference type="PROSITE" id="PS00905">
    <property type="entry name" value="GTP1_OBG"/>
    <property type="match status" value="1"/>
</dbReference>
<dbReference type="PROSITE" id="PS51880">
    <property type="entry name" value="TGS"/>
    <property type="match status" value="1"/>
</dbReference>
<evidence type="ECO:0000250" key="1"/>
<evidence type="ECO:0000250" key="2">
    <source>
        <dbReference type="UniProtKB" id="P55039"/>
    </source>
</evidence>
<evidence type="ECO:0000255" key="3">
    <source>
        <dbReference type="PROSITE-ProRule" id="PRU01047"/>
    </source>
</evidence>
<evidence type="ECO:0000255" key="4">
    <source>
        <dbReference type="PROSITE-ProRule" id="PRU01228"/>
    </source>
</evidence>
<evidence type="ECO:0000269" key="5">
    <source>
    </source>
</evidence>
<evidence type="ECO:0000305" key="6">
    <source>
    </source>
</evidence>